<name>PYRF_METEP</name>
<feature type="chain" id="PRO_1000138539" description="Orotidine 5'-phosphate decarboxylase">
    <location>
        <begin position="1"/>
        <end position="232"/>
    </location>
</feature>
<feature type="active site" description="Proton donor" evidence="1">
    <location>
        <position position="67"/>
    </location>
</feature>
<feature type="binding site" evidence="1">
    <location>
        <position position="16"/>
    </location>
    <ligand>
        <name>substrate</name>
    </ligand>
</feature>
<feature type="binding site" evidence="1">
    <location>
        <position position="38"/>
    </location>
    <ligand>
        <name>substrate</name>
    </ligand>
</feature>
<feature type="binding site" evidence="1">
    <location>
        <begin position="65"/>
        <end position="74"/>
    </location>
    <ligand>
        <name>substrate</name>
    </ligand>
</feature>
<feature type="binding site" evidence="1">
    <location>
        <position position="119"/>
    </location>
    <ligand>
        <name>substrate</name>
    </ligand>
</feature>
<feature type="binding site" evidence="1">
    <location>
        <position position="180"/>
    </location>
    <ligand>
        <name>substrate</name>
    </ligand>
</feature>
<feature type="binding site" evidence="1">
    <location>
        <position position="189"/>
    </location>
    <ligand>
        <name>substrate</name>
    </ligand>
</feature>
<feature type="binding site" evidence="1">
    <location>
        <position position="209"/>
    </location>
    <ligand>
        <name>substrate</name>
    </ligand>
</feature>
<feature type="binding site" evidence="1">
    <location>
        <position position="210"/>
    </location>
    <ligand>
        <name>substrate</name>
    </ligand>
</feature>
<evidence type="ECO:0000255" key="1">
    <source>
        <dbReference type="HAMAP-Rule" id="MF_01200"/>
    </source>
</evidence>
<sequence>MPESADPRDRLIVALDLPDVEAAERLVARIGDAATFYKIGYRLAYAGGLDFAARLAKSGKKTFLDLKLHDIGNTVEEGVRSASALGATFLTVHAYPQTMRAAVRGRGPGLKILAVTVLTSYDDADAAEAGYALPIADLVARRAEQAAEIGIDGIVCSAVEAGAVRHRIGPSGLIVTPGIRPAGAEAGDQKRVMTPGQARAAGIDHVVVGRPITGADDPRAVAQRIVAEMEDA</sequence>
<reference key="1">
    <citation type="submission" date="2007-12" db="EMBL/GenBank/DDBJ databases">
        <title>Complete sequence of Methylobacterium extorquens PA1.</title>
        <authorList>
            <consortium name="US DOE Joint Genome Institute"/>
            <person name="Copeland A."/>
            <person name="Lucas S."/>
            <person name="Lapidus A."/>
            <person name="Barry K."/>
            <person name="Glavina del Rio T."/>
            <person name="Dalin E."/>
            <person name="Tice H."/>
            <person name="Pitluck S."/>
            <person name="Saunders E."/>
            <person name="Brettin T."/>
            <person name="Bruce D."/>
            <person name="Detter J.C."/>
            <person name="Han C."/>
            <person name="Schmutz J."/>
            <person name="Larimer F."/>
            <person name="Land M."/>
            <person name="Hauser L."/>
            <person name="Kyrpides N."/>
            <person name="Kim E."/>
            <person name="Marx C."/>
            <person name="Richardson P."/>
        </authorList>
    </citation>
    <scope>NUCLEOTIDE SEQUENCE [LARGE SCALE GENOMIC DNA]</scope>
    <source>
        <strain>PA1</strain>
    </source>
</reference>
<proteinExistence type="inferred from homology"/>
<dbReference type="EC" id="4.1.1.23" evidence="1"/>
<dbReference type="EMBL" id="CP000908">
    <property type="protein sequence ID" value="ABY29919.1"/>
    <property type="molecule type" value="Genomic_DNA"/>
</dbReference>
<dbReference type="RefSeq" id="WP_012253131.1">
    <property type="nucleotide sequence ID" value="NC_010172.1"/>
</dbReference>
<dbReference type="SMR" id="A9W2W3"/>
<dbReference type="KEGG" id="mex:Mext_1520"/>
<dbReference type="eggNOG" id="COG0284">
    <property type="taxonomic scope" value="Bacteria"/>
</dbReference>
<dbReference type="HOGENOM" id="CLU_067069_1_0_5"/>
<dbReference type="BioCyc" id="MEXT419610:MEXT_RS07720-MONOMER"/>
<dbReference type="UniPathway" id="UPA00070">
    <property type="reaction ID" value="UER00120"/>
</dbReference>
<dbReference type="GO" id="GO:0005829">
    <property type="term" value="C:cytosol"/>
    <property type="evidence" value="ECO:0007669"/>
    <property type="project" value="TreeGrafter"/>
</dbReference>
<dbReference type="GO" id="GO:0004590">
    <property type="term" value="F:orotidine-5'-phosphate decarboxylase activity"/>
    <property type="evidence" value="ECO:0007669"/>
    <property type="project" value="UniProtKB-UniRule"/>
</dbReference>
<dbReference type="GO" id="GO:0006207">
    <property type="term" value="P:'de novo' pyrimidine nucleobase biosynthetic process"/>
    <property type="evidence" value="ECO:0007669"/>
    <property type="project" value="InterPro"/>
</dbReference>
<dbReference type="GO" id="GO:0044205">
    <property type="term" value="P:'de novo' UMP biosynthetic process"/>
    <property type="evidence" value="ECO:0007669"/>
    <property type="project" value="UniProtKB-UniRule"/>
</dbReference>
<dbReference type="CDD" id="cd04725">
    <property type="entry name" value="OMP_decarboxylase_like"/>
    <property type="match status" value="1"/>
</dbReference>
<dbReference type="Gene3D" id="3.20.20.70">
    <property type="entry name" value="Aldolase class I"/>
    <property type="match status" value="1"/>
</dbReference>
<dbReference type="HAMAP" id="MF_01200_B">
    <property type="entry name" value="OMPdecase_type1_B"/>
    <property type="match status" value="1"/>
</dbReference>
<dbReference type="InterPro" id="IPR013785">
    <property type="entry name" value="Aldolase_TIM"/>
</dbReference>
<dbReference type="InterPro" id="IPR014732">
    <property type="entry name" value="OMPdecase"/>
</dbReference>
<dbReference type="InterPro" id="IPR018089">
    <property type="entry name" value="OMPdecase_AS"/>
</dbReference>
<dbReference type="InterPro" id="IPR047596">
    <property type="entry name" value="OMPdecase_bac"/>
</dbReference>
<dbReference type="InterPro" id="IPR001754">
    <property type="entry name" value="OMPdeCOase_dom"/>
</dbReference>
<dbReference type="InterPro" id="IPR011060">
    <property type="entry name" value="RibuloseP-bd_barrel"/>
</dbReference>
<dbReference type="NCBIfam" id="NF001273">
    <property type="entry name" value="PRK00230.1"/>
    <property type="match status" value="1"/>
</dbReference>
<dbReference type="NCBIfam" id="TIGR01740">
    <property type="entry name" value="pyrF"/>
    <property type="match status" value="1"/>
</dbReference>
<dbReference type="PANTHER" id="PTHR32119">
    <property type="entry name" value="OROTIDINE 5'-PHOSPHATE DECARBOXYLASE"/>
    <property type="match status" value="1"/>
</dbReference>
<dbReference type="PANTHER" id="PTHR32119:SF2">
    <property type="entry name" value="OROTIDINE 5'-PHOSPHATE DECARBOXYLASE"/>
    <property type="match status" value="1"/>
</dbReference>
<dbReference type="Pfam" id="PF00215">
    <property type="entry name" value="OMPdecase"/>
    <property type="match status" value="1"/>
</dbReference>
<dbReference type="SMART" id="SM00934">
    <property type="entry name" value="OMPdecase"/>
    <property type="match status" value="1"/>
</dbReference>
<dbReference type="SUPFAM" id="SSF51366">
    <property type="entry name" value="Ribulose-phoshate binding barrel"/>
    <property type="match status" value="1"/>
</dbReference>
<dbReference type="PROSITE" id="PS00156">
    <property type="entry name" value="OMPDECASE"/>
    <property type="match status" value="1"/>
</dbReference>
<keyword id="KW-0210">Decarboxylase</keyword>
<keyword id="KW-0456">Lyase</keyword>
<keyword id="KW-0665">Pyrimidine biosynthesis</keyword>
<gene>
    <name evidence="1" type="primary">pyrF</name>
    <name type="ordered locus">Mext_1520</name>
</gene>
<organism>
    <name type="scientific">Methylorubrum extorquens (strain PA1)</name>
    <name type="common">Methylobacterium extorquens</name>
    <dbReference type="NCBI Taxonomy" id="419610"/>
    <lineage>
        <taxon>Bacteria</taxon>
        <taxon>Pseudomonadati</taxon>
        <taxon>Pseudomonadota</taxon>
        <taxon>Alphaproteobacteria</taxon>
        <taxon>Hyphomicrobiales</taxon>
        <taxon>Methylobacteriaceae</taxon>
        <taxon>Methylorubrum</taxon>
    </lineage>
</organism>
<accession>A9W2W3</accession>
<comment type="function">
    <text evidence="1">Catalyzes the decarboxylation of orotidine 5'-monophosphate (OMP) to uridine 5'-monophosphate (UMP).</text>
</comment>
<comment type="catalytic activity">
    <reaction evidence="1">
        <text>orotidine 5'-phosphate + H(+) = UMP + CO2</text>
        <dbReference type="Rhea" id="RHEA:11596"/>
        <dbReference type="ChEBI" id="CHEBI:15378"/>
        <dbReference type="ChEBI" id="CHEBI:16526"/>
        <dbReference type="ChEBI" id="CHEBI:57538"/>
        <dbReference type="ChEBI" id="CHEBI:57865"/>
        <dbReference type="EC" id="4.1.1.23"/>
    </reaction>
</comment>
<comment type="pathway">
    <text evidence="1">Pyrimidine metabolism; UMP biosynthesis via de novo pathway; UMP from orotate: step 2/2.</text>
</comment>
<comment type="subunit">
    <text evidence="1">Homodimer.</text>
</comment>
<comment type="similarity">
    <text evidence="1">Belongs to the OMP decarboxylase family. Type 1 subfamily.</text>
</comment>
<protein>
    <recommendedName>
        <fullName evidence="1">Orotidine 5'-phosphate decarboxylase</fullName>
        <ecNumber evidence="1">4.1.1.23</ecNumber>
    </recommendedName>
    <alternativeName>
        <fullName evidence="1">OMP decarboxylase</fullName>
        <shortName evidence="1">OMPDCase</shortName>
        <shortName evidence="1">OMPdecase</shortName>
    </alternativeName>
</protein>